<reference key="1">
    <citation type="journal article" date="1994" name="Genomics">
        <title>The HNF-3 gene family of transcription factors in mice: gene structure, cDNA sequence, and mRNA distribution.</title>
        <authorList>
            <person name="Kaestner K."/>
            <person name="Hiemisch H."/>
            <person name="Luckow B."/>
            <person name="Schuetz G."/>
        </authorList>
    </citation>
    <scope>NUCLEOTIDE SEQUENCE [MRNA]</scope>
    <source>
        <tissue>Liver</tissue>
    </source>
</reference>
<reference key="2">
    <citation type="journal article" date="1998" name="Mol. Cell. Biol.">
        <title>Targeted disruption of the gene encoding hepatocyte nuclear factor 3gamma results in reduced transcription of hepatocyte-specific genes.</title>
        <authorList>
            <person name="Kaestner K.H."/>
            <person name="Hiemisch H."/>
            <person name="Schutz G."/>
        </authorList>
    </citation>
    <scope>FUNCTION IN LIVER-SPECIFIC TRANSCRIPTION</scope>
    <scope>DISRUPTION PHENOTYPE</scope>
</reference>
<reference key="3">
    <citation type="journal article" date="2001" name="J. Biol. Chem.">
        <title>Foxa3 (hepatocyte nuclear factor 3gamma) is required for the regulation of hepatic GLUT2 expression and the maintenance of glucose homeostasis during a prolonged fast.</title>
        <authorList>
            <person name="Shen W."/>
            <person name="Scearce L.M."/>
            <person name="Brestelli J.E."/>
            <person name="Sund N.J."/>
            <person name="Kaestner K.H."/>
        </authorList>
    </citation>
    <scope>FUNCTION</scope>
    <scope>DISRUPTION PHENOTYPE</scope>
</reference>
<reference key="4">
    <citation type="journal article" date="2007" name="Dev. Biol.">
        <title>Impaired male fertility and atrophy of seminiferous tubules caused by haploinsufficiency for Foxa3.</title>
        <authorList>
            <person name="Behr R."/>
            <person name="Sackett S.D."/>
            <person name="Bochkis I.M."/>
            <person name="Le P.P."/>
            <person name="Kaestner K.H."/>
        </authorList>
    </citation>
    <scope>DISRUPTION PHENOTYPE</scope>
    <scope>DEVELOPMENTAL STAGE</scope>
    <scope>TISSUE SPECIFICITY</scope>
    <scope>FUNCTION IN SPERMATOGENESIS</scope>
</reference>
<protein>
    <recommendedName>
        <fullName>Hepatocyte nuclear factor 3-gamma</fullName>
        <shortName>HNF-3-gamma</shortName>
        <shortName>HNF-3G</shortName>
    </recommendedName>
    <alternativeName>
        <fullName>Forkhead box protein A3</fullName>
    </alternativeName>
</protein>
<comment type="function">
    <text evidence="1 4 5 6">Transcription factor that is thought to act as a 'pioneer' factor opening the compacted chromatin for other proteins through interactions with nucleosomal core histones and thereby replacing linker histones at target enhancer and/or promoter sites (By similarity). Originally described as a transcription activator for a number of liver genes such as AFP, albumin, tyrosine aminotransferase, PEPCK, etc. Interacts with the cis-acting regulatory regions of these genes. Involved in glucose homeostasis; activates GLUT2 transcription. Involved in regulation of neuronal-specific transcription. Involved in regulation of spermatogenesis; required for the maintenance of the testicular germ cell population and male fertility.</text>
</comment>
<comment type="subunit">
    <text evidence="1">Interacts with FOXA2.</text>
</comment>
<comment type="subcellular location">
    <subcellularLocation>
        <location>Nucleus</location>
    </subcellularLocation>
</comment>
<comment type="tissue specificity">
    <text evidence="5">Restricted mainly to endoderm-derived tissues (lung, liver, stomach, and small intestine), also present additionally in ovary, testis, heart, and adipose tissue, but missing from lung.</text>
</comment>
<comment type="developmental stage">
    <text evidence="5">Expression peaks around day 15.5 of gestation. Expressed from day 6 to day 70 during postnatal testicular development.</text>
</comment>
<comment type="disruption phenotype">
    <text evidence="4 5 6">Reduced expression levels of several HNF3 target genes (phosphoenolpyruvate carboxykinase, transferrin, tyrosine aminotransferase) by 50 to 70%,. The germinal epithelium of testes is characterized by a loss of germ cells secondary to an increase in germ cell apoptosis that ultimately leads to a Sertoli cell-only syndrome. Significantly lower blood glucose in fasted mice.</text>
</comment>
<gene>
    <name type="primary">Foxa3</name>
    <name type="synonym">Hnf3g</name>
    <name type="synonym">Tcf-3g</name>
    <name type="synonym">Tcf3g</name>
</gene>
<sequence length="353" mass="37601">MLGSVKMEAHDLAEWSYYPEAGEVYSPVNPVPTMAPLNSYMTLNPLSSPYPPGGLQASPLPTGPLAPPAPTAPLGPTFPSLGTGGSTGGSASGYVAPGPGLVHGKEMAKGYRRPLAHAKPPYSYISLITMAIQQAPGKMLTLSEIYQWIMDLFPYYRENQQRWQNSIRHSLSFNDCFVKVARSPDKPGKGSYWALHPSSGNMFENGCYLRRQKRFKLEEKAKKGNSATSASRNGTAGSATSATTTAATAVTSPAQPQPTPSEPEAQSGDDVGGLDCASPPSSTPYFSGLELPGELKLDAPYNFNHPFSINNLMSEQTSTPSKLDVGFGGYGAESGEPGVYYQSLYSRSLLNAS</sequence>
<feature type="chain" id="PRO_0000091801" description="Hepatocyte nuclear factor 3-gamma">
    <location>
        <begin position="1"/>
        <end position="353"/>
    </location>
</feature>
<feature type="DNA-binding region" description="Fork-head" evidence="2">
    <location>
        <begin position="118"/>
        <end position="209"/>
    </location>
</feature>
<feature type="region of interest" description="Disordered" evidence="3">
    <location>
        <begin position="52"/>
        <end position="83"/>
    </location>
</feature>
<feature type="region of interest" description="Disordered" evidence="3">
    <location>
        <begin position="219"/>
        <end position="287"/>
    </location>
</feature>
<feature type="compositionally biased region" description="Pro residues" evidence="3">
    <location>
        <begin position="61"/>
        <end position="73"/>
    </location>
</feature>
<feature type="compositionally biased region" description="Low complexity" evidence="3">
    <location>
        <begin position="226"/>
        <end position="254"/>
    </location>
</feature>
<dbReference type="EMBL" id="X74938">
    <property type="protein sequence ID" value="CAA52892.1"/>
    <property type="molecule type" value="mRNA"/>
</dbReference>
<dbReference type="CCDS" id="CCDS20886.1"/>
<dbReference type="PIR" id="C54258">
    <property type="entry name" value="C54258"/>
</dbReference>
<dbReference type="RefSeq" id="NP_032286.1">
    <property type="nucleotide sequence ID" value="NM_008260.2"/>
</dbReference>
<dbReference type="SMR" id="P35584"/>
<dbReference type="FunCoup" id="P35584">
    <property type="interactions" value="250"/>
</dbReference>
<dbReference type="STRING" id="10090.ENSMUSP00000043173"/>
<dbReference type="GlyGen" id="P35584">
    <property type="glycosylation" value="2 sites"/>
</dbReference>
<dbReference type="iPTMnet" id="P35584"/>
<dbReference type="PhosphoSitePlus" id="P35584"/>
<dbReference type="PaxDb" id="10090-ENSMUSP00000043173"/>
<dbReference type="PeptideAtlas" id="P35584"/>
<dbReference type="ProteomicsDB" id="267614"/>
<dbReference type="Antibodypedia" id="4191">
    <property type="antibodies" value="92 antibodies from 25 providers"/>
</dbReference>
<dbReference type="DNASU" id="15377"/>
<dbReference type="Ensembl" id="ENSMUST00000036018.6">
    <property type="protein sequence ID" value="ENSMUSP00000043173.6"/>
    <property type="gene ID" value="ENSMUSG00000040891.7"/>
</dbReference>
<dbReference type="GeneID" id="15377"/>
<dbReference type="KEGG" id="mmu:15377"/>
<dbReference type="UCSC" id="uc009fkd.1">
    <property type="organism name" value="mouse"/>
</dbReference>
<dbReference type="AGR" id="MGI:1347477"/>
<dbReference type="CTD" id="3171"/>
<dbReference type="MGI" id="MGI:1347477">
    <property type="gene designation" value="Foxa3"/>
</dbReference>
<dbReference type="VEuPathDB" id="HostDB:ENSMUSG00000040891"/>
<dbReference type="eggNOG" id="KOG3563">
    <property type="taxonomic scope" value="Eukaryota"/>
</dbReference>
<dbReference type="GeneTree" id="ENSGT00940000162453"/>
<dbReference type="HOGENOM" id="CLU_027910_0_0_1"/>
<dbReference type="InParanoid" id="P35584"/>
<dbReference type="OMA" id="SHDISEW"/>
<dbReference type="OrthoDB" id="5954824at2759"/>
<dbReference type="PhylomeDB" id="P35584"/>
<dbReference type="TreeFam" id="TF316127"/>
<dbReference type="BioGRID-ORCS" id="15377">
    <property type="hits" value="6 hits in 81 CRISPR screens"/>
</dbReference>
<dbReference type="ChiTaRS" id="Foxa3">
    <property type="organism name" value="mouse"/>
</dbReference>
<dbReference type="PRO" id="PR:P35584"/>
<dbReference type="Proteomes" id="UP000000589">
    <property type="component" value="Chromosome 7"/>
</dbReference>
<dbReference type="RNAct" id="P35584">
    <property type="molecule type" value="protein"/>
</dbReference>
<dbReference type="Bgee" id="ENSMUSG00000040891">
    <property type="expression patterns" value="Expressed in mucous cell of stomach and 115 other cell types or tissues"/>
</dbReference>
<dbReference type="GO" id="GO:0015629">
    <property type="term" value="C:actin cytoskeleton"/>
    <property type="evidence" value="ECO:0007669"/>
    <property type="project" value="Ensembl"/>
</dbReference>
<dbReference type="GO" id="GO:0005829">
    <property type="term" value="C:cytosol"/>
    <property type="evidence" value="ECO:0000304"/>
    <property type="project" value="Reactome"/>
</dbReference>
<dbReference type="GO" id="GO:0005654">
    <property type="term" value="C:nucleoplasm"/>
    <property type="evidence" value="ECO:0007669"/>
    <property type="project" value="Ensembl"/>
</dbReference>
<dbReference type="GO" id="GO:0005634">
    <property type="term" value="C:nucleus"/>
    <property type="evidence" value="ECO:0000314"/>
    <property type="project" value="MGI"/>
</dbReference>
<dbReference type="GO" id="GO:0003677">
    <property type="term" value="F:DNA binding"/>
    <property type="evidence" value="ECO:0000314"/>
    <property type="project" value="MGI"/>
</dbReference>
<dbReference type="GO" id="GO:0000981">
    <property type="term" value="F:DNA-binding transcription factor activity, RNA polymerase II-specific"/>
    <property type="evidence" value="ECO:0000305"/>
    <property type="project" value="NTNU_SB"/>
</dbReference>
<dbReference type="GO" id="GO:0019904">
    <property type="term" value="F:protein domain specific binding"/>
    <property type="evidence" value="ECO:0007669"/>
    <property type="project" value="InterPro"/>
</dbReference>
<dbReference type="GO" id="GO:0043565">
    <property type="term" value="F:sequence-specific DNA binding"/>
    <property type="evidence" value="ECO:0000314"/>
    <property type="project" value="MGI"/>
</dbReference>
<dbReference type="GO" id="GO:0000976">
    <property type="term" value="F:transcription cis-regulatory region binding"/>
    <property type="evidence" value="ECO:0007669"/>
    <property type="project" value="Ensembl"/>
</dbReference>
<dbReference type="GO" id="GO:0030154">
    <property type="term" value="P:cell differentiation"/>
    <property type="evidence" value="ECO:0007669"/>
    <property type="project" value="UniProtKB-KW"/>
</dbReference>
<dbReference type="GO" id="GO:0009267">
    <property type="term" value="P:cellular response to starvation"/>
    <property type="evidence" value="ECO:0000315"/>
    <property type="project" value="MGI"/>
</dbReference>
<dbReference type="GO" id="GO:0006325">
    <property type="term" value="P:chromatin organization"/>
    <property type="evidence" value="ECO:0007669"/>
    <property type="project" value="UniProtKB-KW"/>
</dbReference>
<dbReference type="GO" id="GO:0061484">
    <property type="term" value="P:hematopoietic stem cell homeostasis"/>
    <property type="evidence" value="ECO:0000315"/>
    <property type="project" value="MGI"/>
</dbReference>
<dbReference type="GO" id="GO:0001678">
    <property type="term" value="P:intracellular glucose homeostasis"/>
    <property type="evidence" value="ECO:0000315"/>
    <property type="project" value="MGI"/>
</dbReference>
<dbReference type="GO" id="GO:0045944">
    <property type="term" value="P:positive regulation of transcription by RNA polymerase II"/>
    <property type="evidence" value="ECO:0000316"/>
    <property type="project" value="MGI"/>
</dbReference>
<dbReference type="GO" id="GO:0006355">
    <property type="term" value="P:regulation of DNA-templated transcription"/>
    <property type="evidence" value="ECO:0000315"/>
    <property type="project" value="MGI"/>
</dbReference>
<dbReference type="GO" id="GO:0006357">
    <property type="term" value="P:regulation of transcription by RNA polymerase II"/>
    <property type="evidence" value="ECO:0000315"/>
    <property type="project" value="UniProtKB"/>
</dbReference>
<dbReference type="GO" id="GO:0007283">
    <property type="term" value="P:spermatogenesis"/>
    <property type="evidence" value="ECO:0000315"/>
    <property type="project" value="UniProtKB"/>
</dbReference>
<dbReference type="GO" id="GO:0006366">
    <property type="term" value="P:transcription by RNA polymerase II"/>
    <property type="evidence" value="ECO:0000316"/>
    <property type="project" value="MGI"/>
</dbReference>
<dbReference type="CDD" id="cd20040">
    <property type="entry name" value="FH_FOXA3"/>
    <property type="match status" value="1"/>
</dbReference>
<dbReference type="FunFam" id="1.10.10.10:FF:000042">
    <property type="entry name" value="hepatocyte nuclear factor 3-beta"/>
    <property type="match status" value="1"/>
</dbReference>
<dbReference type="Gene3D" id="1.10.10.10">
    <property type="entry name" value="Winged helix-like DNA-binding domain superfamily/Winged helix DNA-binding domain"/>
    <property type="match status" value="1"/>
</dbReference>
<dbReference type="InterPro" id="IPR047366">
    <property type="entry name" value="FH_FOXA3"/>
</dbReference>
<dbReference type="InterPro" id="IPR013638">
    <property type="entry name" value="Fork-head_N"/>
</dbReference>
<dbReference type="InterPro" id="IPR001766">
    <property type="entry name" value="Fork_head_dom"/>
</dbReference>
<dbReference type="InterPro" id="IPR050211">
    <property type="entry name" value="FOX_domain-containing"/>
</dbReference>
<dbReference type="InterPro" id="IPR018122">
    <property type="entry name" value="TF_fork_head_CS_1"/>
</dbReference>
<dbReference type="InterPro" id="IPR030456">
    <property type="entry name" value="TF_fork_head_CS_2"/>
</dbReference>
<dbReference type="InterPro" id="IPR036388">
    <property type="entry name" value="WH-like_DNA-bd_sf"/>
</dbReference>
<dbReference type="InterPro" id="IPR036390">
    <property type="entry name" value="WH_DNA-bd_sf"/>
</dbReference>
<dbReference type="PANTHER" id="PTHR11829">
    <property type="entry name" value="FORKHEAD BOX PROTEIN"/>
    <property type="match status" value="1"/>
</dbReference>
<dbReference type="PANTHER" id="PTHR11829:SF201">
    <property type="entry name" value="HEPATOCYTE NUCLEAR FACTOR 3-GAMMA"/>
    <property type="match status" value="1"/>
</dbReference>
<dbReference type="Pfam" id="PF00250">
    <property type="entry name" value="Forkhead"/>
    <property type="match status" value="1"/>
</dbReference>
<dbReference type="Pfam" id="PF08430">
    <property type="entry name" value="Forkhead_N"/>
    <property type="match status" value="1"/>
</dbReference>
<dbReference type="PRINTS" id="PR00053">
    <property type="entry name" value="FORKHEAD"/>
</dbReference>
<dbReference type="SMART" id="SM00339">
    <property type="entry name" value="FH"/>
    <property type="match status" value="1"/>
</dbReference>
<dbReference type="SUPFAM" id="SSF46785">
    <property type="entry name" value="Winged helix' DNA-binding domain"/>
    <property type="match status" value="1"/>
</dbReference>
<dbReference type="PROSITE" id="PS00657">
    <property type="entry name" value="FORK_HEAD_1"/>
    <property type="match status" value="1"/>
</dbReference>
<dbReference type="PROSITE" id="PS00658">
    <property type="entry name" value="FORK_HEAD_2"/>
    <property type="match status" value="1"/>
</dbReference>
<dbReference type="PROSITE" id="PS50039">
    <property type="entry name" value="FORK_HEAD_3"/>
    <property type="match status" value="1"/>
</dbReference>
<proteinExistence type="evidence at protein level"/>
<organism>
    <name type="scientific">Mus musculus</name>
    <name type="common">Mouse</name>
    <dbReference type="NCBI Taxonomy" id="10090"/>
    <lineage>
        <taxon>Eukaryota</taxon>
        <taxon>Metazoa</taxon>
        <taxon>Chordata</taxon>
        <taxon>Craniata</taxon>
        <taxon>Vertebrata</taxon>
        <taxon>Euteleostomi</taxon>
        <taxon>Mammalia</taxon>
        <taxon>Eutheria</taxon>
        <taxon>Euarchontoglires</taxon>
        <taxon>Glires</taxon>
        <taxon>Rodentia</taxon>
        <taxon>Myomorpha</taxon>
        <taxon>Muroidea</taxon>
        <taxon>Muridae</taxon>
        <taxon>Murinae</taxon>
        <taxon>Mus</taxon>
        <taxon>Mus</taxon>
    </lineage>
</organism>
<accession>P35584</accession>
<evidence type="ECO:0000250" key="1"/>
<evidence type="ECO:0000255" key="2">
    <source>
        <dbReference type="PROSITE-ProRule" id="PRU00089"/>
    </source>
</evidence>
<evidence type="ECO:0000256" key="3">
    <source>
        <dbReference type="SAM" id="MobiDB-lite"/>
    </source>
</evidence>
<evidence type="ECO:0000269" key="4">
    <source>
    </source>
</evidence>
<evidence type="ECO:0000269" key="5">
    <source>
    </source>
</evidence>
<evidence type="ECO:0000269" key="6">
    <source>
    </source>
</evidence>
<name>FOXA3_MOUSE</name>
<keyword id="KW-0010">Activator</keyword>
<keyword id="KW-0156">Chromatin regulator</keyword>
<keyword id="KW-0217">Developmental protein</keyword>
<keyword id="KW-0221">Differentiation</keyword>
<keyword id="KW-0238">DNA-binding</keyword>
<keyword id="KW-0539">Nucleus</keyword>
<keyword id="KW-1185">Reference proteome</keyword>
<keyword id="KW-0744">Spermatogenesis</keyword>
<keyword id="KW-0804">Transcription</keyword>
<keyword id="KW-0805">Transcription regulation</keyword>